<dbReference type="EMBL" id="AE014075">
    <property type="protein sequence ID" value="AAN80532.1"/>
    <property type="molecule type" value="Genomic_DNA"/>
</dbReference>
<dbReference type="RefSeq" id="WP_000648420.1">
    <property type="nucleotide sequence ID" value="NZ_CP051263.1"/>
</dbReference>
<dbReference type="SMR" id="P69777"/>
<dbReference type="STRING" id="199310.c2072"/>
<dbReference type="GeneID" id="93775832"/>
<dbReference type="KEGG" id="ecc:c2072"/>
<dbReference type="eggNOG" id="COG4238">
    <property type="taxonomic scope" value="Bacteria"/>
</dbReference>
<dbReference type="HOGENOM" id="CLU_166934_2_1_6"/>
<dbReference type="BioCyc" id="ECOL199310:C2072-MONOMER"/>
<dbReference type="Proteomes" id="UP000001410">
    <property type="component" value="Chromosome"/>
</dbReference>
<dbReference type="GO" id="GO:0009279">
    <property type="term" value="C:cell outer membrane"/>
    <property type="evidence" value="ECO:0007669"/>
    <property type="project" value="UniProtKB-SubCell"/>
</dbReference>
<dbReference type="GO" id="GO:0005576">
    <property type="term" value="C:extracellular region"/>
    <property type="evidence" value="ECO:0007669"/>
    <property type="project" value="UniProtKB-KW"/>
</dbReference>
<dbReference type="GO" id="GO:0008289">
    <property type="term" value="F:lipid binding"/>
    <property type="evidence" value="ECO:0007669"/>
    <property type="project" value="UniProtKB-UniRule"/>
</dbReference>
<dbReference type="GO" id="GO:0042834">
    <property type="term" value="F:peptidoglycan binding"/>
    <property type="evidence" value="ECO:0007669"/>
    <property type="project" value="UniProtKB-UniRule"/>
</dbReference>
<dbReference type="GO" id="GO:0030258">
    <property type="term" value="P:lipid modification"/>
    <property type="evidence" value="ECO:0007669"/>
    <property type="project" value="UniProtKB-UniRule"/>
</dbReference>
<dbReference type="GO" id="GO:0043580">
    <property type="term" value="P:periplasmic space organization"/>
    <property type="evidence" value="ECO:0007669"/>
    <property type="project" value="UniProtKB-UniRule"/>
</dbReference>
<dbReference type="FunFam" id="1.20.5.190:FF:000002">
    <property type="entry name" value="Major outer membrane lipoprotein"/>
    <property type="match status" value="1"/>
</dbReference>
<dbReference type="Gene3D" id="1.20.5.190">
    <property type="match status" value="1"/>
</dbReference>
<dbReference type="HAMAP" id="MF_00843">
    <property type="entry name" value="Lpp"/>
    <property type="match status" value="1"/>
</dbReference>
<dbReference type="InterPro" id="IPR006817">
    <property type="entry name" value="Lipoprotein_leucine-zipper_dom"/>
</dbReference>
<dbReference type="InterPro" id="IPR016367">
    <property type="entry name" value="MOM_Lpp"/>
</dbReference>
<dbReference type="NCBIfam" id="NF040598">
    <property type="entry name" value="Ala_zip_lipo"/>
    <property type="match status" value="1"/>
</dbReference>
<dbReference type="NCBIfam" id="NF011925">
    <property type="entry name" value="PRK15396.1"/>
    <property type="match status" value="1"/>
</dbReference>
<dbReference type="PANTHER" id="PTHR38763:SF1">
    <property type="entry name" value="MAJOR OUTER MEMBRANE LIPOPROTEIN LPP"/>
    <property type="match status" value="1"/>
</dbReference>
<dbReference type="PANTHER" id="PTHR38763">
    <property type="entry name" value="MAJOR OUTER MEMBRANE PROLIPOPROTEIN LPP"/>
    <property type="match status" value="1"/>
</dbReference>
<dbReference type="Pfam" id="PF04728">
    <property type="entry name" value="LPP"/>
    <property type="match status" value="1"/>
</dbReference>
<dbReference type="PIRSF" id="PIRSF002855">
    <property type="entry name" value="Murein-lipoprotein"/>
    <property type="match status" value="1"/>
</dbReference>
<dbReference type="SUPFAM" id="SSF58042">
    <property type="entry name" value="Outer membrane lipoprotein"/>
    <property type="match status" value="1"/>
</dbReference>
<dbReference type="PROSITE" id="PS51257">
    <property type="entry name" value="PROKAR_LIPOPROTEIN"/>
    <property type="match status" value="1"/>
</dbReference>
<protein>
    <recommendedName>
        <fullName evidence="1">Major outer membrane lipoprotein Lpp</fullName>
    </recommendedName>
    <alternativeName>
        <fullName evidence="1">Braun lipoprotein</fullName>
        <shortName evidence="1">BLP</shortName>
    </alternativeName>
    <alternativeName>
        <fullName evidence="1">Murein lipoprotein</fullName>
    </alternativeName>
</protein>
<reference key="1">
    <citation type="journal article" date="2002" name="Proc. Natl. Acad. Sci. U.S.A.">
        <title>Extensive mosaic structure revealed by the complete genome sequence of uropathogenic Escherichia coli.</title>
        <authorList>
            <person name="Welch R.A."/>
            <person name="Burland V."/>
            <person name="Plunkett G. III"/>
            <person name="Redford P."/>
            <person name="Roesch P."/>
            <person name="Rasko D."/>
            <person name="Buckles E.L."/>
            <person name="Liou S.-R."/>
            <person name="Boutin A."/>
            <person name="Hackett J."/>
            <person name="Stroud D."/>
            <person name="Mayhew G.F."/>
            <person name="Rose D.J."/>
            <person name="Zhou S."/>
            <person name="Schwartz D.C."/>
            <person name="Perna N.T."/>
            <person name="Mobley H.L.T."/>
            <person name="Donnenberg M.S."/>
            <person name="Blattner F.R."/>
        </authorList>
    </citation>
    <scope>NUCLEOTIDE SEQUENCE [LARGE SCALE GENOMIC DNA]</scope>
    <source>
        <strain>CFT073 / ATCC 700928 / UPEC</strain>
    </source>
</reference>
<organism>
    <name type="scientific">Escherichia coli O6:H1 (strain CFT073 / ATCC 700928 / UPEC)</name>
    <dbReference type="NCBI Taxonomy" id="199310"/>
    <lineage>
        <taxon>Bacteria</taxon>
        <taxon>Pseudomonadati</taxon>
        <taxon>Pseudomonadota</taxon>
        <taxon>Gammaproteobacteria</taxon>
        <taxon>Enterobacterales</taxon>
        <taxon>Enterobacteriaceae</taxon>
        <taxon>Escherichia</taxon>
    </lineage>
</organism>
<sequence length="78" mass="8323">MKATKLVLGAVILGSTLLAGCSSNAKIDQLSSDVQTLNAKVDQLSNDVNAMRSDVQAAKDDAARANQRLDNMATKYRK</sequence>
<gene>
    <name evidence="1" type="primary">lpp</name>
    <name type="ordered locus">c2072</name>
</gene>
<name>LPP_ECOL6</name>
<evidence type="ECO:0000255" key="1">
    <source>
        <dbReference type="HAMAP-Rule" id="MF_00843"/>
    </source>
</evidence>
<accession>P69777</accession>
<accession>P02937</accession>
<keyword id="KW-0998">Cell outer membrane</keyword>
<keyword id="KW-0134">Cell wall</keyword>
<keyword id="KW-0175">Coiled coil</keyword>
<keyword id="KW-0449">Lipoprotein</keyword>
<keyword id="KW-0472">Membrane</keyword>
<keyword id="KW-0564">Palmitate</keyword>
<keyword id="KW-0572">Peptidoglycan-anchor</keyword>
<keyword id="KW-1185">Reference proteome</keyword>
<keyword id="KW-0677">Repeat</keyword>
<keyword id="KW-0964">Secreted</keyword>
<keyword id="KW-0732">Signal</keyword>
<comment type="function">
    <text evidence="1">A highly abundant outer membrane lipoprotein that controls the distance between the inner and outer membranes. The only protein known to be covalently linked to the peptidoglycan network (PGN). Also non-covalently binds the PGN. The link between the cell outer membrane and PGN contributes to maintenance of the structural and functional integrity of the cell envelope, and maintains the correct distance between the PGN and the outer membrane.</text>
</comment>
<comment type="subunit">
    <text evidence="1">Homotrimer.</text>
</comment>
<comment type="subcellular location">
    <subcellularLocation>
        <location evidence="1">Cell outer membrane</location>
        <topology evidence="1">Lipid-anchor</topology>
        <orientation evidence="1">Periplasmic side</orientation>
    </subcellularLocation>
    <subcellularLocation>
        <location evidence="1">Secreted</location>
        <location evidence="1">Cell wall</location>
        <topology evidence="1">Peptidoglycan-anchor</topology>
    </subcellularLocation>
    <text evidence="1">Attached via its lipidated N-terminus to the inner leaflet of the outer membrane. Attached to the peptidoglycan network (PGN) via its C-terminus.</text>
</comment>
<comment type="similarity">
    <text evidence="1">Belongs to the Lpp family.</text>
</comment>
<feature type="signal peptide" evidence="1">
    <location>
        <begin position="1"/>
        <end position="20"/>
    </location>
</feature>
<feature type="chain" id="PRO_0000018333" description="Major outer membrane lipoprotein Lpp" evidence="1">
    <location>
        <begin position="21"/>
        <end position="78"/>
    </location>
</feature>
<feature type="repeat" evidence="1">
    <location>
        <begin position="24"/>
        <end position="34"/>
    </location>
</feature>
<feature type="repeat" evidence="1">
    <location>
        <begin position="38"/>
        <end position="48"/>
    </location>
</feature>
<feature type="coiled-coil region" evidence="1">
    <location>
        <begin position="27"/>
        <end position="75"/>
    </location>
</feature>
<feature type="modified residue" description="N6-murein peptidoglycan lysine" evidence="1">
    <location>
        <position position="78"/>
    </location>
</feature>
<feature type="lipid moiety-binding region" description="N-palmitoyl cysteine" evidence="1">
    <location>
        <position position="21"/>
    </location>
</feature>
<feature type="lipid moiety-binding region" description="S-diacylglycerol cysteine" evidence="1">
    <location>
        <position position="21"/>
    </location>
</feature>
<proteinExistence type="inferred from homology"/>